<gene>
    <name evidence="1" type="primary">infA</name>
</gene>
<geneLocation type="chloroplast"/>
<reference key="1">
    <citation type="journal article" date="2006" name="BMC Evol. Biol.">
        <title>Complete plastid genome sequences of Drimys, Liriodendron, and Piper: implications for the phylogenetic relationships of magnoliids.</title>
        <authorList>
            <person name="Cai Z."/>
            <person name="Penaflor C."/>
            <person name="Kuehl J.V."/>
            <person name="Leebens-Mack J."/>
            <person name="Carlson J.E."/>
            <person name="dePamphilis C.W."/>
            <person name="Boore J.L."/>
            <person name="Jansen R.K."/>
        </authorList>
    </citation>
    <scope>NUCLEOTIDE SEQUENCE [LARGE SCALE GENOMIC DNA]</scope>
</reference>
<comment type="function">
    <text evidence="1">One of the essential components for the initiation of protein synthesis. Stabilizes the binding of IF-2 and IF-3 on the 30S subunit to which N-formylmethionyl-tRNA(fMet) subsequently binds. Helps modulate mRNA selection, yielding the 30S pre-initiation complex (PIC). Upon addition of the 50S ribosomal subunit IF-1, IF-2 and IF-3 are released leaving the mature 70S translation initiation complex.</text>
</comment>
<comment type="subunit">
    <text evidence="1">Component of the 30S ribosomal translation pre-initiation complex which assembles on the 30S ribosome in the order IF-2 and IF-3, IF-1 and N-formylmethionyl-tRNA(fMet); mRNA recruitment can occur at any time during PIC assembly.</text>
</comment>
<comment type="subcellular location">
    <subcellularLocation>
        <location evidence="1">Plastid</location>
        <location evidence="1">Chloroplast</location>
    </subcellularLocation>
</comment>
<comment type="similarity">
    <text evidence="1">Belongs to the IF-1 family.</text>
</comment>
<sequence>MKEQKLIHEGLITESLPNGMFRVRLDNEDLILGYVSGRIRRSFIRILPGDRVKIEVSRYDSTRGRIIYRLRNKDSND</sequence>
<dbReference type="EMBL" id="DQ899947">
    <property type="protein sequence ID" value="ABI32544.1"/>
    <property type="molecule type" value="Genomic_DNA"/>
</dbReference>
<dbReference type="RefSeq" id="YP_740237.1">
    <property type="nucleotide sequence ID" value="NC_008326.1"/>
</dbReference>
<dbReference type="SMR" id="Q0G9I4"/>
<dbReference type="GeneID" id="4266661"/>
<dbReference type="GO" id="GO:0009507">
    <property type="term" value="C:chloroplast"/>
    <property type="evidence" value="ECO:0007669"/>
    <property type="project" value="UniProtKB-SubCell"/>
</dbReference>
<dbReference type="GO" id="GO:0005829">
    <property type="term" value="C:cytosol"/>
    <property type="evidence" value="ECO:0007669"/>
    <property type="project" value="TreeGrafter"/>
</dbReference>
<dbReference type="GO" id="GO:0043022">
    <property type="term" value="F:ribosome binding"/>
    <property type="evidence" value="ECO:0007669"/>
    <property type="project" value="UniProtKB-UniRule"/>
</dbReference>
<dbReference type="GO" id="GO:0019843">
    <property type="term" value="F:rRNA binding"/>
    <property type="evidence" value="ECO:0007669"/>
    <property type="project" value="UniProtKB-UniRule"/>
</dbReference>
<dbReference type="GO" id="GO:0003743">
    <property type="term" value="F:translation initiation factor activity"/>
    <property type="evidence" value="ECO:0007669"/>
    <property type="project" value="UniProtKB-UniRule"/>
</dbReference>
<dbReference type="CDD" id="cd04451">
    <property type="entry name" value="S1_IF1"/>
    <property type="match status" value="1"/>
</dbReference>
<dbReference type="FunFam" id="2.40.50.140:FF:000019">
    <property type="entry name" value="Translation initiation factor IF-1, chloroplastic"/>
    <property type="match status" value="1"/>
</dbReference>
<dbReference type="Gene3D" id="2.40.50.140">
    <property type="entry name" value="Nucleic acid-binding proteins"/>
    <property type="match status" value="1"/>
</dbReference>
<dbReference type="HAMAP" id="MF_00075">
    <property type="entry name" value="IF_1"/>
    <property type="match status" value="1"/>
</dbReference>
<dbReference type="InterPro" id="IPR012340">
    <property type="entry name" value="NA-bd_OB-fold"/>
</dbReference>
<dbReference type="InterPro" id="IPR006196">
    <property type="entry name" value="RNA-binding_domain_S1_IF1"/>
</dbReference>
<dbReference type="InterPro" id="IPR003029">
    <property type="entry name" value="S1_domain"/>
</dbReference>
<dbReference type="InterPro" id="IPR004368">
    <property type="entry name" value="TIF_IF1"/>
</dbReference>
<dbReference type="NCBIfam" id="TIGR00008">
    <property type="entry name" value="infA"/>
    <property type="match status" value="1"/>
</dbReference>
<dbReference type="PANTHER" id="PTHR33370">
    <property type="entry name" value="TRANSLATION INITIATION FACTOR IF-1, CHLOROPLASTIC"/>
    <property type="match status" value="1"/>
</dbReference>
<dbReference type="PANTHER" id="PTHR33370:SF1">
    <property type="entry name" value="TRANSLATION INITIATION FACTOR IF-1, CHLOROPLASTIC"/>
    <property type="match status" value="1"/>
</dbReference>
<dbReference type="Pfam" id="PF01176">
    <property type="entry name" value="eIF-1a"/>
    <property type="match status" value="1"/>
</dbReference>
<dbReference type="SMART" id="SM00316">
    <property type="entry name" value="S1"/>
    <property type="match status" value="1"/>
</dbReference>
<dbReference type="SUPFAM" id="SSF50249">
    <property type="entry name" value="Nucleic acid-binding proteins"/>
    <property type="match status" value="1"/>
</dbReference>
<dbReference type="PROSITE" id="PS50832">
    <property type="entry name" value="S1_IF1_TYPE"/>
    <property type="match status" value="1"/>
</dbReference>
<protein>
    <recommendedName>
        <fullName evidence="1">Translation initiation factor IF-1, chloroplastic</fullName>
    </recommendedName>
</protein>
<proteinExistence type="inferred from homology"/>
<feature type="chain" id="PRO_0000275394" description="Translation initiation factor IF-1, chloroplastic">
    <location>
        <begin position="1"/>
        <end position="77"/>
    </location>
</feature>
<feature type="domain" description="S1-like" evidence="1">
    <location>
        <begin position="1"/>
        <end position="71"/>
    </location>
</feature>
<accession>Q0G9I4</accession>
<organism>
    <name type="scientific">Liriodendron tulipifera</name>
    <name type="common">Tuliptree</name>
    <name type="synonym">Tulip poplar</name>
    <dbReference type="NCBI Taxonomy" id="3415"/>
    <lineage>
        <taxon>Eukaryota</taxon>
        <taxon>Viridiplantae</taxon>
        <taxon>Streptophyta</taxon>
        <taxon>Embryophyta</taxon>
        <taxon>Tracheophyta</taxon>
        <taxon>Spermatophyta</taxon>
        <taxon>Magnoliopsida</taxon>
        <taxon>Magnoliidae</taxon>
        <taxon>Magnoliales</taxon>
        <taxon>Magnoliaceae</taxon>
        <taxon>Liriodendron</taxon>
    </lineage>
</organism>
<name>IF1C_LIRTU</name>
<keyword id="KW-0150">Chloroplast</keyword>
<keyword id="KW-0396">Initiation factor</keyword>
<keyword id="KW-0934">Plastid</keyword>
<keyword id="KW-0648">Protein biosynthesis</keyword>
<keyword id="KW-0694">RNA-binding</keyword>
<keyword id="KW-0699">rRNA-binding</keyword>
<evidence type="ECO:0000255" key="1">
    <source>
        <dbReference type="HAMAP-Rule" id="MF_00075"/>
    </source>
</evidence>